<name>GLYA_RICFE</name>
<protein>
    <recommendedName>
        <fullName evidence="1">Serine hydroxymethyltransferase</fullName>
        <shortName evidence="1">SHMT</shortName>
        <shortName evidence="1">Serine methylase</shortName>
        <ecNumber evidence="1">2.1.2.1</ecNumber>
    </recommendedName>
</protein>
<evidence type="ECO:0000255" key="1">
    <source>
        <dbReference type="HAMAP-Rule" id="MF_00051"/>
    </source>
</evidence>
<dbReference type="EC" id="2.1.2.1" evidence="1"/>
<dbReference type="EMBL" id="CP000053">
    <property type="protein sequence ID" value="AAY62039.1"/>
    <property type="molecule type" value="Genomic_DNA"/>
</dbReference>
<dbReference type="SMR" id="Q4UK96"/>
<dbReference type="STRING" id="315456.RF_1188"/>
<dbReference type="KEGG" id="rfe:RF_1188"/>
<dbReference type="eggNOG" id="COG0112">
    <property type="taxonomic scope" value="Bacteria"/>
</dbReference>
<dbReference type="HOGENOM" id="CLU_022477_2_1_5"/>
<dbReference type="OrthoDB" id="9803846at2"/>
<dbReference type="UniPathway" id="UPA00193"/>
<dbReference type="UniPathway" id="UPA00288">
    <property type="reaction ID" value="UER01023"/>
</dbReference>
<dbReference type="Proteomes" id="UP000008548">
    <property type="component" value="Chromosome"/>
</dbReference>
<dbReference type="GO" id="GO:0005829">
    <property type="term" value="C:cytosol"/>
    <property type="evidence" value="ECO:0007669"/>
    <property type="project" value="TreeGrafter"/>
</dbReference>
<dbReference type="GO" id="GO:0004372">
    <property type="term" value="F:glycine hydroxymethyltransferase activity"/>
    <property type="evidence" value="ECO:0007669"/>
    <property type="project" value="UniProtKB-UniRule"/>
</dbReference>
<dbReference type="GO" id="GO:0030170">
    <property type="term" value="F:pyridoxal phosphate binding"/>
    <property type="evidence" value="ECO:0007669"/>
    <property type="project" value="UniProtKB-UniRule"/>
</dbReference>
<dbReference type="GO" id="GO:0019264">
    <property type="term" value="P:glycine biosynthetic process from serine"/>
    <property type="evidence" value="ECO:0007669"/>
    <property type="project" value="UniProtKB-UniRule"/>
</dbReference>
<dbReference type="GO" id="GO:0035999">
    <property type="term" value="P:tetrahydrofolate interconversion"/>
    <property type="evidence" value="ECO:0007669"/>
    <property type="project" value="UniProtKB-UniRule"/>
</dbReference>
<dbReference type="CDD" id="cd00378">
    <property type="entry name" value="SHMT"/>
    <property type="match status" value="1"/>
</dbReference>
<dbReference type="FunFam" id="3.40.640.10:FF:000001">
    <property type="entry name" value="Serine hydroxymethyltransferase"/>
    <property type="match status" value="1"/>
</dbReference>
<dbReference type="Gene3D" id="3.90.1150.10">
    <property type="entry name" value="Aspartate Aminotransferase, domain 1"/>
    <property type="match status" value="1"/>
</dbReference>
<dbReference type="Gene3D" id="3.40.640.10">
    <property type="entry name" value="Type I PLP-dependent aspartate aminotransferase-like (Major domain)"/>
    <property type="match status" value="1"/>
</dbReference>
<dbReference type="HAMAP" id="MF_00051">
    <property type="entry name" value="SHMT"/>
    <property type="match status" value="1"/>
</dbReference>
<dbReference type="InterPro" id="IPR015424">
    <property type="entry name" value="PyrdxlP-dep_Trfase"/>
</dbReference>
<dbReference type="InterPro" id="IPR015421">
    <property type="entry name" value="PyrdxlP-dep_Trfase_major"/>
</dbReference>
<dbReference type="InterPro" id="IPR015422">
    <property type="entry name" value="PyrdxlP-dep_Trfase_small"/>
</dbReference>
<dbReference type="InterPro" id="IPR001085">
    <property type="entry name" value="Ser_HO-MeTrfase"/>
</dbReference>
<dbReference type="InterPro" id="IPR049943">
    <property type="entry name" value="Ser_HO-MeTrfase-like"/>
</dbReference>
<dbReference type="InterPro" id="IPR019798">
    <property type="entry name" value="Ser_HO-MeTrfase_PLP_BS"/>
</dbReference>
<dbReference type="InterPro" id="IPR039429">
    <property type="entry name" value="SHMT-like_dom"/>
</dbReference>
<dbReference type="NCBIfam" id="NF000586">
    <property type="entry name" value="PRK00011.1"/>
    <property type="match status" value="1"/>
</dbReference>
<dbReference type="PANTHER" id="PTHR11680">
    <property type="entry name" value="SERINE HYDROXYMETHYLTRANSFERASE"/>
    <property type="match status" value="1"/>
</dbReference>
<dbReference type="PANTHER" id="PTHR11680:SF35">
    <property type="entry name" value="SERINE HYDROXYMETHYLTRANSFERASE 1"/>
    <property type="match status" value="1"/>
</dbReference>
<dbReference type="Pfam" id="PF00464">
    <property type="entry name" value="SHMT"/>
    <property type="match status" value="1"/>
</dbReference>
<dbReference type="PIRSF" id="PIRSF000412">
    <property type="entry name" value="SHMT"/>
    <property type="match status" value="1"/>
</dbReference>
<dbReference type="SUPFAM" id="SSF53383">
    <property type="entry name" value="PLP-dependent transferases"/>
    <property type="match status" value="1"/>
</dbReference>
<dbReference type="PROSITE" id="PS00096">
    <property type="entry name" value="SHMT"/>
    <property type="match status" value="1"/>
</dbReference>
<accession>Q4UK96</accession>
<comment type="function">
    <text evidence="1">Catalyzes the reversible interconversion of serine and glycine with tetrahydrofolate (THF) serving as the one-carbon carrier. This reaction serves as the major source of one-carbon groups required for the biosynthesis of purines, thymidylate, methionine, and other important biomolecules. Also exhibits THF-independent aldolase activity toward beta-hydroxyamino acids, producing glycine and aldehydes, via a retro-aldol mechanism.</text>
</comment>
<comment type="catalytic activity">
    <reaction evidence="1">
        <text>(6R)-5,10-methylene-5,6,7,8-tetrahydrofolate + glycine + H2O = (6S)-5,6,7,8-tetrahydrofolate + L-serine</text>
        <dbReference type="Rhea" id="RHEA:15481"/>
        <dbReference type="ChEBI" id="CHEBI:15377"/>
        <dbReference type="ChEBI" id="CHEBI:15636"/>
        <dbReference type="ChEBI" id="CHEBI:33384"/>
        <dbReference type="ChEBI" id="CHEBI:57305"/>
        <dbReference type="ChEBI" id="CHEBI:57453"/>
        <dbReference type="EC" id="2.1.2.1"/>
    </reaction>
</comment>
<comment type="cofactor">
    <cofactor evidence="1">
        <name>pyridoxal 5'-phosphate</name>
        <dbReference type="ChEBI" id="CHEBI:597326"/>
    </cofactor>
</comment>
<comment type="pathway">
    <text evidence="1">One-carbon metabolism; tetrahydrofolate interconversion.</text>
</comment>
<comment type="pathway">
    <text evidence="1">Amino-acid biosynthesis; glycine biosynthesis; glycine from L-serine: step 1/1.</text>
</comment>
<comment type="subunit">
    <text evidence="1">Homodimer.</text>
</comment>
<comment type="subcellular location">
    <subcellularLocation>
        <location evidence="1">Cytoplasm</location>
    </subcellularLocation>
</comment>
<comment type="similarity">
    <text evidence="1">Belongs to the SHMT family.</text>
</comment>
<gene>
    <name evidence="1" type="primary">glyA</name>
    <name type="ordered locus">RF_1188</name>
</gene>
<keyword id="KW-0028">Amino-acid biosynthesis</keyword>
<keyword id="KW-0963">Cytoplasm</keyword>
<keyword id="KW-0554">One-carbon metabolism</keyword>
<keyword id="KW-0663">Pyridoxal phosphate</keyword>
<keyword id="KW-0808">Transferase</keyword>
<feature type="chain" id="PRO_0000235017" description="Serine hydroxymethyltransferase">
    <location>
        <begin position="1"/>
        <end position="421"/>
    </location>
</feature>
<feature type="binding site" evidence="1">
    <location>
        <position position="121"/>
    </location>
    <ligand>
        <name>(6S)-5,6,7,8-tetrahydrofolate</name>
        <dbReference type="ChEBI" id="CHEBI:57453"/>
    </ligand>
</feature>
<feature type="binding site" evidence="1">
    <location>
        <begin position="125"/>
        <end position="127"/>
    </location>
    <ligand>
        <name>(6S)-5,6,7,8-tetrahydrofolate</name>
        <dbReference type="ChEBI" id="CHEBI:57453"/>
    </ligand>
</feature>
<feature type="binding site" evidence="1">
    <location>
        <position position="246"/>
    </location>
    <ligand>
        <name>(6S)-5,6,7,8-tetrahydrofolate</name>
        <dbReference type="ChEBI" id="CHEBI:57453"/>
    </ligand>
</feature>
<feature type="binding site" evidence="1">
    <location>
        <begin position="354"/>
        <end position="356"/>
    </location>
    <ligand>
        <name>(6S)-5,6,7,8-tetrahydrofolate</name>
        <dbReference type="ChEBI" id="CHEBI:57453"/>
    </ligand>
</feature>
<feature type="site" description="Plays an important role in substrate specificity" evidence="1">
    <location>
        <position position="229"/>
    </location>
</feature>
<feature type="modified residue" description="N6-(pyridoxal phosphate)lysine" evidence="1">
    <location>
        <position position="230"/>
    </location>
</feature>
<proteinExistence type="inferred from homology"/>
<organism>
    <name type="scientific">Rickettsia felis (strain ATCC VR-1525 / URRWXCal2)</name>
    <name type="common">Rickettsia azadi</name>
    <dbReference type="NCBI Taxonomy" id="315456"/>
    <lineage>
        <taxon>Bacteria</taxon>
        <taxon>Pseudomonadati</taxon>
        <taxon>Pseudomonadota</taxon>
        <taxon>Alphaproteobacteria</taxon>
        <taxon>Rickettsiales</taxon>
        <taxon>Rickettsiaceae</taxon>
        <taxon>Rickettsieae</taxon>
        <taxon>Rickettsia</taxon>
        <taxon>spotted fever group</taxon>
    </lineage>
</organism>
<sequence>MNIFNNHLHETDKEIDEIIKHEKLRQNSVIELIASENFVSPAVLEAQGSILTNKYAEGYSGKRFYNGCEEVDKAENLAIERVKKLFNCKYANVQSHSGSQANQAVYLALLQPGDTILGMSLDSGGHLTHGAAPNMSGKWFNAVSYSVNKETYLIDYDEIERLADLHKPKLLIAGFSAYPRNIDFARFREIADKVGAYFMADIAHIAGLVATGEHQSPIPYTHAVTSTTHKTLRGPRGGLILSNDEEIGKKINSALFPGLQGGPLMHIIAAKAVAFLENLQPEYKSYIKQVISNAKALASSLQERGYDILTGGTDNHIVLVDLCKDGITGKLAANSLDRAGITCNKNAIPFDETSPFITSGIRLGTPACTTRGFKEKDFVLVGHMVADILDGLKNNEDNGKAEQKVLTEVTKLIKLFPFYTR</sequence>
<reference key="1">
    <citation type="journal article" date="2005" name="PLoS Biol.">
        <title>The genome sequence of Rickettsia felis identifies the first putative conjugative plasmid in an obligate intracellular parasite.</title>
        <authorList>
            <person name="Ogata H."/>
            <person name="Renesto P."/>
            <person name="Audic S."/>
            <person name="Robert C."/>
            <person name="Blanc G."/>
            <person name="Fournier P.-E."/>
            <person name="Parinello H."/>
            <person name="Claverie J.-M."/>
            <person name="Raoult D."/>
        </authorList>
    </citation>
    <scope>NUCLEOTIDE SEQUENCE [LARGE SCALE GENOMIC DNA]</scope>
    <source>
        <strain>ATCC VR-1525 / URRWXCal2</strain>
    </source>
</reference>